<reference key="1">
    <citation type="journal article" date="2005" name="Nature">
        <title>The genome sequence of the rice blast fungus Magnaporthe grisea.</title>
        <authorList>
            <person name="Dean R.A."/>
            <person name="Talbot N.J."/>
            <person name="Ebbole D.J."/>
            <person name="Farman M.L."/>
            <person name="Mitchell T.K."/>
            <person name="Orbach M.J."/>
            <person name="Thon M.R."/>
            <person name="Kulkarni R."/>
            <person name="Xu J.-R."/>
            <person name="Pan H."/>
            <person name="Read N.D."/>
            <person name="Lee Y.-H."/>
            <person name="Carbone I."/>
            <person name="Brown D."/>
            <person name="Oh Y.Y."/>
            <person name="Donofrio N."/>
            <person name="Jeong J.S."/>
            <person name="Soanes D.M."/>
            <person name="Djonovic S."/>
            <person name="Kolomiets E."/>
            <person name="Rehmeyer C."/>
            <person name="Li W."/>
            <person name="Harding M."/>
            <person name="Kim S."/>
            <person name="Lebrun M.-H."/>
            <person name="Bohnert H."/>
            <person name="Coughlan S."/>
            <person name="Butler J."/>
            <person name="Calvo S.E."/>
            <person name="Ma L.-J."/>
            <person name="Nicol R."/>
            <person name="Purcell S."/>
            <person name="Nusbaum C."/>
            <person name="Galagan J.E."/>
            <person name="Birren B.W."/>
        </authorList>
    </citation>
    <scope>NUCLEOTIDE SEQUENCE [LARGE SCALE GENOMIC DNA]</scope>
    <source>
        <strain>70-15 / ATCC MYA-4617 / FGSC 8958</strain>
    </source>
</reference>
<sequence length="1395" mass="156360">MATQVLIAHSGQRLQIDTSRLTTLDEFRSAVSRSTSIPQNCIIALVPPGKALRPQAIQMEKEIFVYDSRMTQTGAPGSPFPVKLEIDLPKPYAITNPPNDIIDTRSLESWQDLFRERRVWAHRLSEDCEGMEKEAHDQYEAMDNMLSCLDAAVANLESVVRATENKYEDLKKWAATEQTGYNDLVTRWEQNLGLARSIPISAAMVRLMTGKDVTGAKGRPSKQATLEDLVDLDCARKEGRRAPTVLRKFNARIADLEKAEGRLMQNFEELEAEFRRVISRSVMGHSQDATQLLQDIQALAGKVENDYRTTMDYSTSTRDLLQASKIAQTHTEKHLPSLHKRALEMDGMLRYAIKARNALALEQAEFMRSIADVSKLDMQVKSLINAIAEDEELATFDYLRLIHQVPYMYAAFTAEAIRRKEWFDKVKTDSTTLANEMALFQDEEAKRRRKWYKTIGDTSYGPESLSTDNNVPGLEVNLLGEDELWPSTSRKDLEEFLDLLQRQRADASIIGDVGKIIAELSNPTKQQFKRLKAFKNGSVHDSALGRSGLMIRGDDELLRSLQDDKTKLETKLRTAESRVRRLEDLLHRQGQASRPTLGNLFQNPSQQLPERSGSAQSVGSPGPIGDRRQSDEVGNQLVQRVAQLEKELQEEKERNAALERDAADRTTHTNDIKAQMDDVNATKKDLLENMEAQKREFLVERKALDEEIRNLKARLEETEDEFHNIDESREHEKTSYDEKVQLLEAQLESLTKEKSDDALKAQGQVDFLRNETRLQRESNEALQAQIQASQDELGLLNKKLKTTNEAADVQLRALRELYTTFVKSAGIPEDVNDLADTVLNNAAETLAKVQNLDADISIMRSNLALAQDVAKDLRAQQANALEKLAKEETTSMHLREQCDEHKAKVNALEGELADGRKQLDELRTQIAQGETGSESLRTRLEEEEKKIVRLTEDLASKQSQVGSLEEELRLFQERLQDSQSKLTTLTLRTETRNERTKDISQRLYSQNERLVRLLERLGFSVSRENGVMTIQKIPRAERSTMNLAASSTADAKSRIASEPADVELLYWMNATDVQGETEKYDKFMSTLGSFDVDAFADTVYRRVKDVEHIARKLQRDVRGYREKTHALHKDAHDKIAFRNFKEGDLALFLPTRNQTNGAWAAFNIGFPHYFLREQEHHRLSNREWLVARITRVQEKVVDLSKSLDTTESINGTSGGAEDDNDNPFDLSDGLRWYLIDAQEDKPGAPSTPGLGKTTVASTKVEAKGDMQTQPRSTPGGLAVLGGAKPSAVDGASKSLSKSLESRRSSTSSTRRPLPFAGALSRNAPGSETNSLRAVATTAPGDGAGSPSGPTSPKPHLAHGEDQDVRLAALPEPQQQRVEVRNDSGGGAIDSLLGPT</sequence>
<comment type="function">
    <text evidence="1">Involved in cytoplasm to vacuole transport (Cvt), pexophagy, mitophagy and nucleophagy. Recruits mitochondria for their selective degradation via autophagy (mitophagy) during starvation. Works as scaffold proteins that recruit ATG proteins to the pre-autophagosome (PAS), the site of vesicle/autophagosome formation. Required for the Cvt vesicles completion (By similarity).</text>
</comment>
<comment type="subunit">
    <text evidence="1">Homodimer.</text>
</comment>
<comment type="subcellular location">
    <subcellularLocation>
        <location evidence="1">Preautophagosomal structure membrane</location>
        <topology evidence="1">Peripheral membrane protein</topology>
    </subcellularLocation>
    <subcellularLocation>
        <location evidence="1">Vacuole membrane</location>
        <topology evidence="1">Peripheral membrane protein</topology>
    </subcellularLocation>
    <text evidence="1">During pexophagy, accumulates in the vacuolar membrane region, where the peroxisomes contact the vacuole.</text>
</comment>
<comment type="similarity">
    <text evidence="4">Belongs to the ATG11 family.</text>
</comment>
<protein>
    <recommendedName>
        <fullName>Autophagy-related protein 11</fullName>
    </recommendedName>
</protein>
<proteinExistence type="inferred from homology"/>
<keyword id="KW-0072">Autophagy</keyword>
<keyword id="KW-0175">Coiled coil</keyword>
<keyword id="KW-0472">Membrane</keyword>
<keyword id="KW-0653">Protein transport</keyword>
<keyword id="KW-1185">Reference proteome</keyword>
<keyword id="KW-0813">Transport</keyword>
<keyword id="KW-0926">Vacuole</keyword>
<dbReference type="EMBL" id="CM001231">
    <property type="protein sequence ID" value="EHA58358.1"/>
    <property type="molecule type" value="Genomic_DNA"/>
</dbReference>
<dbReference type="RefSeq" id="XP_003710970.1">
    <property type="nucleotide sequence ID" value="XM_003710922.1"/>
</dbReference>
<dbReference type="SMR" id="Q51UJ9"/>
<dbReference type="FunCoup" id="Q51UJ9">
    <property type="interactions" value="136"/>
</dbReference>
<dbReference type="STRING" id="242507.Q51UJ9"/>
<dbReference type="EnsemblFungi" id="MGG_04486T0">
    <property type="protein sequence ID" value="MGG_04486T0"/>
    <property type="gene ID" value="MGG_04486"/>
</dbReference>
<dbReference type="GeneID" id="2678072"/>
<dbReference type="KEGG" id="mgr:MGG_04486"/>
<dbReference type="VEuPathDB" id="FungiDB:MGG_04486"/>
<dbReference type="eggNOG" id="ENOG502QVZE">
    <property type="taxonomic scope" value="Eukaryota"/>
</dbReference>
<dbReference type="HOGENOM" id="CLU_002803_1_0_1"/>
<dbReference type="InParanoid" id="Q51UJ9"/>
<dbReference type="OMA" id="GLRWYLI"/>
<dbReference type="OrthoDB" id="447953at2759"/>
<dbReference type="PHI-base" id="PHI:11534"/>
<dbReference type="PHI-base" id="PHI:2085"/>
<dbReference type="Proteomes" id="UP000009058">
    <property type="component" value="Chromosome 1"/>
</dbReference>
<dbReference type="GO" id="GO:1990316">
    <property type="term" value="C:Atg1/ULK1 kinase complex"/>
    <property type="evidence" value="ECO:0007669"/>
    <property type="project" value="TreeGrafter"/>
</dbReference>
<dbReference type="GO" id="GO:0034045">
    <property type="term" value="C:phagophore assembly site membrane"/>
    <property type="evidence" value="ECO:0007669"/>
    <property type="project" value="UniProtKB-SubCell"/>
</dbReference>
<dbReference type="GO" id="GO:0005774">
    <property type="term" value="C:vacuolar membrane"/>
    <property type="evidence" value="ECO:0007669"/>
    <property type="project" value="UniProtKB-SubCell"/>
</dbReference>
<dbReference type="GO" id="GO:0060090">
    <property type="term" value="F:molecular adaptor activity"/>
    <property type="evidence" value="ECO:0007669"/>
    <property type="project" value="TreeGrafter"/>
</dbReference>
<dbReference type="GO" id="GO:0019901">
    <property type="term" value="F:protein kinase binding"/>
    <property type="evidence" value="ECO:0007669"/>
    <property type="project" value="TreeGrafter"/>
</dbReference>
<dbReference type="GO" id="GO:0000045">
    <property type="term" value="P:autophagosome assembly"/>
    <property type="evidence" value="ECO:0007669"/>
    <property type="project" value="InterPro"/>
</dbReference>
<dbReference type="GO" id="GO:0000422">
    <property type="term" value="P:autophagy of mitochondrion"/>
    <property type="evidence" value="ECO:0007669"/>
    <property type="project" value="TreeGrafter"/>
</dbReference>
<dbReference type="GO" id="GO:0034727">
    <property type="term" value="P:piecemeal microautophagy of the nucleus"/>
    <property type="evidence" value="ECO:0007669"/>
    <property type="project" value="TreeGrafter"/>
</dbReference>
<dbReference type="GO" id="GO:0015031">
    <property type="term" value="P:protein transport"/>
    <property type="evidence" value="ECO:0007669"/>
    <property type="project" value="UniProtKB-KW"/>
</dbReference>
<dbReference type="GO" id="GO:0061709">
    <property type="term" value="P:reticulophagy"/>
    <property type="evidence" value="ECO:0007669"/>
    <property type="project" value="TreeGrafter"/>
</dbReference>
<dbReference type="GO" id="GO:0034517">
    <property type="term" value="P:ribophagy"/>
    <property type="evidence" value="ECO:0007669"/>
    <property type="project" value="TreeGrafter"/>
</dbReference>
<dbReference type="Gene3D" id="1.10.287.1490">
    <property type="match status" value="1"/>
</dbReference>
<dbReference type="InterPro" id="IPR040040">
    <property type="entry name" value="ATG11"/>
</dbReference>
<dbReference type="InterPro" id="IPR019460">
    <property type="entry name" value="Atg11_C"/>
</dbReference>
<dbReference type="InterPro" id="IPR045326">
    <property type="entry name" value="ATG17-like_dom"/>
</dbReference>
<dbReference type="PANTHER" id="PTHR13222">
    <property type="entry name" value="RB1-INDUCIBLE COILED-COIL"/>
    <property type="match status" value="1"/>
</dbReference>
<dbReference type="PANTHER" id="PTHR13222:SF1">
    <property type="entry name" value="RB1-INDUCIBLE COILED-COIL PROTEIN 1"/>
    <property type="match status" value="1"/>
</dbReference>
<dbReference type="Pfam" id="PF10377">
    <property type="entry name" value="ATG11"/>
    <property type="match status" value="1"/>
</dbReference>
<dbReference type="Pfam" id="PF04108">
    <property type="entry name" value="ATG17_like"/>
    <property type="match status" value="1"/>
</dbReference>
<dbReference type="SUPFAM" id="SSF57997">
    <property type="entry name" value="Tropomyosin"/>
    <property type="match status" value="1"/>
</dbReference>
<organism>
    <name type="scientific">Pyricularia oryzae (strain 70-15 / ATCC MYA-4617 / FGSC 8958)</name>
    <name type="common">Rice blast fungus</name>
    <name type="synonym">Magnaporthe oryzae</name>
    <dbReference type="NCBI Taxonomy" id="242507"/>
    <lineage>
        <taxon>Eukaryota</taxon>
        <taxon>Fungi</taxon>
        <taxon>Dikarya</taxon>
        <taxon>Ascomycota</taxon>
        <taxon>Pezizomycotina</taxon>
        <taxon>Sordariomycetes</taxon>
        <taxon>Sordariomycetidae</taxon>
        <taxon>Magnaporthales</taxon>
        <taxon>Pyriculariaceae</taxon>
        <taxon>Pyricularia</taxon>
    </lineage>
</organism>
<name>ATG11_PYRO7</name>
<gene>
    <name type="primary">ATG11</name>
    <name type="ORF">MGG_04486</name>
</gene>
<feature type="chain" id="PRO_0000124549" description="Autophagy-related protein 11">
    <location>
        <begin position="1"/>
        <end position="1395"/>
    </location>
</feature>
<feature type="region of interest" description="Disordered" evidence="3">
    <location>
        <begin position="586"/>
        <end position="632"/>
    </location>
</feature>
<feature type="region of interest" description="Disordered" evidence="3">
    <location>
        <begin position="647"/>
        <end position="673"/>
    </location>
</feature>
<feature type="region of interest" description="Disordered" evidence="3">
    <location>
        <begin position="1260"/>
        <end position="1395"/>
    </location>
</feature>
<feature type="coiled-coil region" evidence="2">
    <location>
        <begin position="123"/>
        <end position="172"/>
    </location>
</feature>
<feature type="coiled-coil region" evidence="2">
    <location>
        <begin position="246"/>
        <end position="277"/>
    </location>
</feature>
<feature type="coiled-coil region" evidence="2">
    <location>
        <begin position="555"/>
        <end position="591"/>
    </location>
</feature>
<feature type="coiled-coil region" evidence="2">
    <location>
        <begin position="629"/>
        <end position="818"/>
    </location>
</feature>
<feature type="coiled-coil region" evidence="2">
    <location>
        <begin position="862"/>
        <end position="986"/>
    </location>
</feature>
<feature type="compositionally biased region" description="Polar residues" evidence="3">
    <location>
        <begin position="590"/>
        <end position="619"/>
    </location>
</feature>
<feature type="compositionally biased region" description="Low complexity" evidence="3">
    <location>
        <begin position="1292"/>
        <end position="1311"/>
    </location>
</feature>
<feature type="compositionally biased region" description="Low complexity" evidence="3">
    <location>
        <begin position="1337"/>
        <end position="1350"/>
    </location>
</feature>
<evidence type="ECO:0000250" key="1"/>
<evidence type="ECO:0000255" key="2"/>
<evidence type="ECO:0000256" key="3">
    <source>
        <dbReference type="SAM" id="MobiDB-lite"/>
    </source>
</evidence>
<evidence type="ECO:0000305" key="4"/>
<accession>Q51UJ9</accession>
<accession>A4QVJ9</accession>
<accession>G4MSA0</accession>